<evidence type="ECO:0000255" key="1">
    <source>
        <dbReference type="HAMAP-Rule" id="MF_00318"/>
    </source>
</evidence>
<gene>
    <name evidence="1" type="primary">eno</name>
    <name type="ordered locus">Bphyt_2560</name>
</gene>
<protein>
    <recommendedName>
        <fullName evidence="1">Enolase</fullName>
        <ecNumber evidence="1">4.2.1.11</ecNumber>
    </recommendedName>
    <alternativeName>
        <fullName evidence="1">2-phospho-D-glycerate hydro-lyase</fullName>
    </alternativeName>
    <alternativeName>
        <fullName evidence="1">2-phosphoglycerate dehydratase</fullName>
    </alternativeName>
</protein>
<name>ENO_PARPJ</name>
<sequence length="427" mass="45589">MSAIVDIIGREILDSRGNPTVECDVLLESGTMGRAAVPSGASTGSREAIELRDGETGRYGGKGVLKAVEHINTEISEAIMGLDASEQAFLDKTLLELDGTDNKSRLGANAMLAVSMAVAKAAAEEAGLPLYRYFGGSGAMQLPVPMMNIVNGGAHANNSLDIQEFMIVPVSQPTFREALRCGAEVFHALKKILSDRGMSTAVGDEGGFAPNFGSNDECLSTILQAIEKAGYRAGEDVLLALDCAASEFYHDGKYQLAGEGLQLSSTEFADYLANLADKFPIVSIEDGMHESDWAGWKTLTDKLGKKVQLVGDDLFVTNTRILKEGIEKGIANSILIKINQIGTLTETFAAIEMAKRAGYTAVISHRSGETEDSTIADIAVGLNAGQIKTGSLSRSDRISKYNQLLRIEEDLGDIASYPGKSAFYNLR</sequence>
<feature type="chain" id="PRO_1000115841" description="Enolase">
    <location>
        <begin position="1"/>
        <end position="427"/>
    </location>
</feature>
<feature type="active site" description="Proton donor" evidence="1">
    <location>
        <position position="205"/>
    </location>
</feature>
<feature type="active site" description="Proton acceptor" evidence="1">
    <location>
        <position position="337"/>
    </location>
</feature>
<feature type="binding site" evidence="1">
    <location>
        <position position="163"/>
    </location>
    <ligand>
        <name>(2R)-2-phosphoglycerate</name>
        <dbReference type="ChEBI" id="CHEBI:58289"/>
    </ligand>
</feature>
<feature type="binding site" evidence="1">
    <location>
        <position position="242"/>
    </location>
    <ligand>
        <name>Mg(2+)</name>
        <dbReference type="ChEBI" id="CHEBI:18420"/>
    </ligand>
</feature>
<feature type="binding site" evidence="1">
    <location>
        <position position="285"/>
    </location>
    <ligand>
        <name>Mg(2+)</name>
        <dbReference type="ChEBI" id="CHEBI:18420"/>
    </ligand>
</feature>
<feature type="binding site" evidence="1">
    <location>
        <position position="312"/>
    </location>
    <ligand>
        <name>Mg(2+)</name>
        <dbReference type="ChEBI" id="CHEBI:18420"/>
    </ligand>
</feature>
<feature type="binding site" evidence="1">
    <location>
        <position position="337"/>
    </location>
    <ligand>
        <name>(2R)-2-phosphoglycerate</name>
        <dbReference type="ChEBI" id="CHEBI:58289"/>
    </ligand>
</feature>
<feature type="binding site" evidence="1">
    <location>
        <position position="366"/>
    </location>
    <ligand>
        <name>(2R)-2-phosphoglycerate</name>
        <dbReference type="ChEBI" id="CHEBI:58289"/>
    </ligand>
</feature>
<feature type="binding site" evidence="1">
    <location>
        <position position="367"/>
    </location>
    <ligand>
        <name>(2R)-2-phosphoglycerate</name>
        <dbReference type="ChEBI" id="CHEBI:58289"/>
    </ligand>
</feature>
<feature type="binding site" evidence="1">
    <location>
        <position position="388"/>
    </location>
    <ligand>
        <name>(2R)-2-phosphoglycerate</name>
        <dbReference type="ChEBI" id="CHEBI:58289"/>
    </ligand>
</feature>
<accession>B2SXU9</accession>
<comment type="function">
    <text evidence="1">Catalyzes the reversible conversion of 2-phosphoglycerate (2-PG) into phosphoenolpyruvate (PEP). It is essential for the degradation of carbohydrates via glycolysis.</text>
</comment>
<comment type="catalytic activity">
    <reaction evidence="1">
        <text>(2R)-2-phosphoglycerate = phosphoenolpyruvate + H2O</text>
        <dbReference type="Rhea" id="RHEA:10164"/>
        <dbReference type="ChEBI" id="CHEBI:15377"/>
        <dbReference type="ChEBI" id="CHEBI:58289"/>
        <dbReference type="ChEBI" id="CHEBI:58702"/>
        <dbReference type="EC" id="4.2.1.11"/>
    </reaction>
</comment>
<comment type="cofactor">
    <cofactor evidence="1">
        <name>Mg(2+)</name>
        <dbReference type="ChEBI" id="CHEBI:18420"/>
    </cofactor>
    <text evidence="1">Binds a second Mg(2+) ion via substrate during catalysis.</text>
</comment>
<comment type="pathway">
    <text evidence="1">Carbohydrate degradation; glycolysis; pyruvate from D-glyceraldehyde 3-phosphate: step 4/5.</text>
</comment>
<comment type="subcellular location">
    <subcellularLocation>
        <location evidence="1">Cytoplasm</location>
    </subcellularLocation>
    <subcellularLocation>
        <location evidence="1">Secreted</location>
    </subcellularLocation>
    <subcellularLocation>
        <location evidence="1">Cell surface</location>
    </subcellularLocation>
    <text evidence="1">Fractions of enolase are present in both the cytoplasm and on the cell surface.</text>
</comment>
<comment type="similarity">
    <text evidence="1">Belongs to the enolase family.</text>
</comment>
<keyword id="KW-0963">Cytoplasm</keyword>
<keyword id="KW-0324">Glycolysis</keyword>
<keyword id="KW-0456">Lyase</keyword>
<keyword id="KW-0460">Magnesium</keyword>
<keyword id="KW-0479">Metal-binding</keyword>
<keyword id="KW-0964">Secreted</keyword>
<proteinExistence type="inferred from homology"/>
<dbReference type="EC" id="4.2.1.11" evidence="1"/>
<dbReference type="EMBL" id="CP001052">
    <property type="protein sequence ID" value="ACD16955.1"/>
    <property type="molecule type" value="Genomic_DNA"/>
</dbReference>
<dbReference type="RefSeq" id="WP_012433549.1">
    <property type="nucleotide sequence ID" value="NC_010681.1"/>
</dbReference>
<dbReference type="SMR" id="B2SXU9"/>
<dbReference type="STRING" id="398527.Bphyt_2560"/>
<dbReference type="GeneID" id="97307337"/>
<dbReference type="KEGG" id="bpy:Bphyt_2560"/>
<dbReference type="eggNOG" id="COG0148">
    <property type="taxonomic scope" value="Bacteria"/>
</dbReference>
<dbReference type="HOGENOM" id="CLU_031223_2_1_4"/>
<dbReference type="OrthoDB" id="9804716at2"/>
<dbReference type="UniPathway" id="UPA00109">
    <property type="reaction ID" value="UER00187"/>
</dbReference>
<dbReference type="Proteomes" id="UP000001739">
    <property type="component" value="Chromosome 1"/>
</dbReference>
<dbReference type="GO" id="GO:0009986">
    <property type="term" value="C:cell surface"/>
    <property type="evidence" value="ECO:0007669"/>
    <property type="project" value="UniProtKB-SubCell"/>
</dbReference>
<dbReference type="GO" id="GO:0005576">
    <property type="term" value="C:extracellular region"/>
    <property type="evidence" value="ECO:0007669"/>
    <property type="project" value="UniProtKB-SubCell"/>
</dbReference>
<dbReference type="GO" id="GO:0000015">
    <property type="term" value="C:phosphopyruvate hydratase complex"/>
    <property type="evidence" value="ECO:0007669"/>
    <property type="project" value="InterPro"/>
</dbReference>
<dbReference type="GO" id="GO:0000287">
    <property type="term" value="F:magnesium ion binding"/>
    <property type="evidence" value="ECO:0007669"/>
    <property type="project" value="UniProtKB-UniRule"/>
</dbReference>
<dbReference type="GO" id="GO:0004634">
    <property type="term" value="F:phosphopyruvate hydratase activity"/>
    <property type="evidence" value="ECO:0007669"/>
    <property type="project" value="UniProtKB-UniRule"/>
</dbReference>
<dbReference type="GO" id="GO:0006096">
    <property type="term" value="P:glycolytic process"/>
    <property type="evidence" value="ECO:0007669"/>
    <property type="project" value="UniProtKB-UniRule"/>
</dbReference>
<dbReference type="CDD" id="cd03313">
    <property type="entry name" value="enolase"/>
    <property type="match status" value="1"/>
</dbReference>
<dbReference type="FunFam" id="3.20.20.120:FF:000001">
    <property type="entry name" value="Enolase"/>
    <property type="match status" value="1"/>
</dbReference>
<dbReference type="FunFam" id="3.30.390.10:FF:000001">
    <property type="entry name" value="Enolase"/>
    <property type="match status" value="1"/>
</dbReference>
<dbReference type="Gene3D" id="3.20.20.120">
    <property type="entry name" value="Enolase-like C-terminal domain"/>
    <property type="match status" value="1"/>
</dbReference>
<dbReference type="Gene3D" id="3.30.390.10">
    <property type="entry name" value="Enolase-like, N-terminal domain"/>
    <property type="match status" value="1"/>
</dbReference>
<dbReference type="HAMAP" id="MF_00318">
    <property type="entry name" value="Enolase"/>
    <property type="match status" value="1"/>
</dbReference>
<dbReference type="InterPro" id="IPR000941">
    <property type="entry name" value="Enolase"/>
</dbReference>
<dbReference type="InterPro" id="IPR036849">
    <property type="entry name" value="Enolase-like_C_sf"/>
</dbReference>
<dbReference type="InterPro" id="IPR029017">
    <property type="entry name" value="Enolase-like_N"/>
</dbReference>
<dbReference type="InterPro" id="IPR020810">
    <property type="entry name" value="Enolase_C"/>
</dbReference>
<dbReference type="InterPro" id="IPR020809">
    <property type="entry name" value="Enolase_CS"/>
</dbReference>
<dbReference type="InterPro" id="IPR020811">
    <property type="entry name" value="Enolase_N"/>
</dbReference>
<dbReference type="NCBIfam" id="TIGR01060">
    <property type="entry name" value="eno"/>
    <property type="match status" value="1"/>
</dbReference>
<dbReference type="PANTHER" id="PTHR11902">
    <property type="entry name" value="ENOLASE"/>
    <property type="match status" value="1"/>
</dbReference>
<dbReference type="PANTHER" id="PTHR11902:SF1">
    <property type="entry name" value="ENOLASE"/>
    <property type="match status" value="1"/>
</dbReference>
<dbReference type="Pfam" id="PF00113">
    <property type="entry name" value="Enolase_C"/>
    <property type="match status" value="1"/>
</dbReference>
<dbReference type="Pfam" id="PF03952">
    <property type="entry name" value="Enolase_N"/>
    <property type="match status" value="1"/>
</dbReference>
<dbReference type="PIRSF" id="PIRSF001400">
    <property type="entry name" value="Enolase"/>
    <property type="match status" value="1"/>
</dbReference>
<dbReference type="PRINTS" id="PR00148">
    <property type="entry name" value="ENOLASE"/>
</dbReference>
<dbReference type="SFLD" id="SFLDS00001">
    <property type="entry name" value="Enolase"/>
    <property type="match status" value="1"/>
</dbReference>
<dbReference type="SFLD" id="SFLDF00002">
    <property type="entry name" value="enolase"/>
    <property type="match status" value="1"/>
</dbReference>
<dbReference type="SMART" id="SM01192">
    <property type="entry name" value="Enolase_C"/>
    <property type="match status" value="1"/>
</dbReference>
<dbReference type="SMART" id="SM01193">
    <property type="entry name" value="Enolase_N"/>
    <property type="match status" value="1"/>
</dbReference>
<dbReference type="SUPFAM" id="SSF51604">
    <property type="entry name" value="Enolase C-terminal domain-like"/>
    <property type="match status" value="1"/>
</dbReference>
<dbReference type="SUPFAM" id="SSF54826">
    <property type="entry name" value="Enolase N-terminal domain-like"/>
    <property type="match status" value="1"/>
</dbReference>
<dbReference type="PROSITE" id="PS00164">
    <property type="entry name" value="ENOLASE"/>
    <property type="match status" value="1"/>
</dbReference>
<reference key="1">
    <citation type="journal article" date="2011" name="J. Bacteriol.">
        <title>Complete genome sequence of the plant growth-promoting endophyte Burkholderia phytofirmans strain PsJN.</title>
        <authorList>
            <person name="Weilharter A."/>
            <person name="Mitter B."/>
            <person name="Shin M.V."/>
            <person name="Chain P.S."/>
            <person name="Nowak J."/>
            <person name="Sessitsch A."/>
        </authorList>
    </citation>
    <scope>NUCLEOTIDE SEQUENCE [LARGE SCALE GENOMIC DNA]</scope>
    <source>
        <strain>DSM 17436 / LMG 22146 / PsJN</strain>
    </source>
</reference>
<organism>
    <name type="scientific">Paraburkholderia phytofirmans (strain DSM 17436 / LMG 22146 / PsJN)</name>
    <name type="common">Burkholderia phytofirmans</name>
    <dbReference type="NCBI Taxonomy" id="398527"/>
    <lineage>
        <taxon>Bacteria</taxon>
        <taxon>Pseudomonadati</taxon>
        <taxon>Pseudomonadota</taxon>
        <taxon>Betaproteobacteria</taxon>
        <taxon>Burkholderiales</taxon>
        <taxon>Burkholderiaceae</taxon>
        <taxon>Paraburkholderia</taxon>
    </lineage>
</organism>